<proteinExistence type="evidence at protein level"/>
<keyword id="KW-0007">Acetylation</keyword>
<keyword id="KW-0010">Activator</keyword>
<keyword id="KW-0238">DNA-binding</keyword>
<keyword id="KW-1017">Isopeptide bond</keyword>
<keyword id="KW-0479">Metal-binding</keyword>
<keyword id="KW-0539">Nucleus</keyword>
<keyword id="KW-1185">Reference proteome</keyword>
<keyword id="KW-0677">Repeat</keyword>
<keyword id="KW-0804">Transcription</keyword>
<keyword id="KW-0805">Transcription regulation</keyword>
<keyword id="KW-0832">Ubl conjugation</keyword>
<keyword id="KW-0862">Zinc</keyword>
<keyword id="KW-0863">Zinc-finger</keyword>
<organism>
    <name type="scientific">Gallus gallus</name>
    <name type="common">Chicken</name>
    <dbReference type="NCBI Taxonomy" id="9031"/>
    <lineage>
        <taxon>Eukaryota</taxon>
        <taxon>Metazoa</taxon>
        <taxon>Chordata</taxon>
        <taxon>Craniata</taxon>
        <taxon>Vertebrata</taxon>
        <taxon>Euteleostomi</taxon>
        <taxon>Archelosauria</taxon>
        <taxon>Archosauria</taxon>
        <taxon>Dinosauria</taxon>
        <taxon>Saurischia</taxon>
        <taxon>Theropoda</taxon>
        <taxon>Coelurosauria</taxon>
        <taxon>Aves</taxon>
        <taxon>Neognathae</taxon>
        <taxon>Galloanserae</taxon>
        <taxon>Galliformes</taxon>
        <taxon>Phasianidae</taxon>
        <taxon>Phasianinae</taxon>
        <taxon>Gallus</taxon>
    </lineage>
</organism>
<comment type="function">
    <text evidence="1 5">Transcriptional factor that can act as an activator or repressor depending on post-translational modifications. Binds to GT and GC boxes promoter elements. Competes with SP1 for the GC-box promoters. Weak activator of transcription (By similarity). Required for activation of SPARC transcription.</text>
</comment>
<comment type="subunit">
    <text evidence="1 5">Interacts with HDAC1 and HDAC2; the interaction deacetylates SP3 and regulates its transcriptional activity (By similarity). Interacts with v-Jun.</text>
</comment>
<comment type="subcellular location">
    <subcellularLocation>
        <location evidence="1">Nucleus</location>
    </subcellularLocation>
    <subcellularLocation>
        <location evidence="1">Nucleus</location>
        <location evidence="1">PML body</location>
    </subcellularLocation>
    <text evidence="1">Localizes to the nuclear periphery and in nuclear dots when sumoylated. Some localization in PML nuclear bodies (By similarity).</text>
</comment>
<comment type="domain">
    <text evidence="2">The 9aaTAD motif is a transactivation domain present in a large number of yeast and animal transcription factors.</text>
</comment>
<comment type="PTM">
    <text>Acetylated by histone acetyltransferase p300, deacetylated by HDACs. Acetylation/deacetylation states regulate transcriptional activity. Acetylation appears to activate transcription. Alternate sumoylation and acetylation at Lys-541 also control transcriptional activity.</text>
</comment>
<comment type="PTM">
    <text evidence="1">Sumoylation represses transcriptional activity. Lys-541 is the major site. Sumoylation at this site promotes nuclear localization to the nuclear periphery, nuclear dots and PML nuclear bodies. Alternate sumoylation and acetylation at Lys-541 also control transcriptional activity (By similarity).</text>
</comment>
<comment type="similarity">
    <text evidence="6">Belongs to the Sp1 C2H2-type zinc-finger protein family.</text>
</comment>
<accession>Q90WR8</accession>
<name>SP3_CHICK</name>
<protein>
    <recommendedName>
        <fullName>Transcription factor Sp3</fullName>
    </recommendedName>
</protein>
<feature type="chain" id="PRO_0000047143" description="Transcription factor Sp3">
    <location>
        <begin position="1"/>
        <end position="771"/>
    </location>
</feature>
<feature type="zinc finger region" description="C2H2-type 1" evidence="3">
    <location>
        <begin position="611"/>
        <end position="635"/>
    </location>
</feature>
<feature type="zinc finger region" description="C2H2-type 2" evidence="3">
    <location>
        <begin position="641"/>
        <end position="665"/>
    </location>
</feature>
<feature type="zinc finger region" description="C2H2-type 3" evidence="3">
    <location>
        <begin position="671"/>
        <end position="693"/>
    </location>
</feature>
<feature type="region of interest" description="Disordered" evidence="4">
    <location>
        <begin position="1"/>
        <end position="47"/>
    </location>
</feature>
<feature type="region of interest" description="Disordered" evidence="4">
    <location>
        <begin position="60"/>
        <end position="79"/>
    </location>
</feature>
<feature type="region of interest" description="Transactivation domain (Gln-rich)" evidence="1">
    <location>
        <begin position="129"/>
        <end position="228"/>
    </location>
</feature>
<feature type="region of interest" description="Transactivation domain (Gln-rich)" evidence="1">
    <location>
        <begin position="341"/>
        <end position="489"/>
    </location>
</feature>
<feature type="region of interest" description="Repressor domain" evidence="1">
    <location>
        <begin position="524"/>
        <end position="610"/>
    </location>
</feature>
<feature type="short sequence motif" description="9aaTAD" evidence="2">
    <location>
        <begin position="451"/>
        <end position="459"/>
    </location>
</feature>
<feature type="compositionally biased region" description="Low complexity" evidence="4">
    <location>
        <begin position="34"/>
        <end position="47"/>
    </location>
</feature>
<feature type="modified residue" description="N6-acetyllysine; alternate" evidence="1">
    <location>
        <position position="541"/>
    </location>
</feature>
<feature type="cross-link" description="Glycyl lysine isopeptide (Lys-Gly) (interchain with G-Cter in SUMO)" evidence="1">
    <location>
        <position position="109"/>
    </location>
</feature>
<feature type="cross-link" description="Glycyl lysine isopeptide (Lys-Gly) (interchain with G-Cter in SUMO); alternate" evidence="1">
    <location>
        <position position="541"/>
    </location>
</feature>
<sequence>MTAPEQPVKQEEMAALDVDSSGHGEYLQHGNGNASASAAAAAPQDAQPSPLALLAATCSKIGPPSPEEDEAAAAAASHSAGATGDLASVQLAGTPNRWEVLSAAPATIKDEAGNIVQIPGAATVTSSGQYVLPIQSLQNQQIFSVAPGSDSSNGTVSNVQYQVIPQIQTADGQQVQLGFAASSDNSSINQETGQIQIIPGSNQTIIASGSPSANIQNILSQSGQVQVQGVAIGGSSFPGQAQVVANVPLGLPGNITFVPINSVDLDSLGLGSGSQTMTAGINADGHLINTGQAMDSSDNSERTGEQVSPEITETATDNDLFVPTSSSSQLPVTIDSSSILEQNANNLTTTSGQVHSSDLQGNYIQTSVSDDTQAQNIQVSTAQPIVQHIQLQESQQPTSQAQIVQGIAQQTIHGVQASQSISPQALQNLQLQLNPGTFLIQAQTVTPSGQITWQTFQVQGVQNLQNLQIQNAPGQQITLTPVQTLTLGQVAAGGALTSTPVSLSTAQLPNLQTVTVNSIDSAGIQLHQGENAGSPADIRIKEEEPDPEEWQLSGDSTLNTNDLTHLRVQVVDEEGDQPHQEGKRLRRVACTCPNCKEGGGRGSNLGKKKQHICHIPGCGKVYGKTSHLRAHLRWHSGERPFVCNWMFCGKRFTRSDELQRHRRTHTGEKKFVCPECSKRFMRSDHLAKHIKTHQNKKGIHSSSTVLASVEATSDDTLITAGGTTLILANIQQGSVSGIGTVNTSGTSNQDILTNTEIPLQLVTVSGNETME</sequence>
<dbReference type="EMBL" id="AJ317961">
    <property type="protein sequence ID" value="CAC84905.1"/>
    <property type="molecule type" value="mRNA"/>
</dbReference>
<dbReference type="RefSeq" id="NP_989934.1">
    <property type="nucleotide sequence ID" value="NM_204603.2"/>
</dbReference>
<dbReference type="SMR" id="Q90WR8"/>
<dbReference type="FunCoup" id="Q90WR8">
    <property type="interactions" value="1805"/>
</dbReference>
<dbReference type="STRING" id="9031.ENSGALP00000046340"/>
<dbReference type="GlyGen" id="Q90WR8">
    <property type="glycosylation" value="1 site"/>
</dbReference>
<dbReference type="PaxDb" id="9031-ENSGALP00000015174"/>
<dbReference type="Ensembl" id="ENSGALT00010055094.1">
    <property type="protein sequence ID" value="ENSGALP00010033316.1"/>
    <property type="gene ID" value="ENSGALG00010022643.1"/>
</dbReference>
<dbReference type="GeneID" id="395302"/>
<dbReference type="KEGG" id="gga:395302"/>
<dbReference type="CTD" id="6670"/>
<dbReference type="VEuPathDB" id="HostDB:geneid_395302"/>
<dbReference type="eggNOG" id="KOG1721">
    <property type="taxonomic scope" value="Eukaryota"/>
</dbReference>
<dbReference type="GeneTree" id="ENSGT00940000155099"/>
<dbReference type="HOGENOM" id="CLU_019688_2_1_1"/>
<dbReference type="InParanoid" id="Q90WR8"/>
<dbReference type="OMA" id="TCTQVES"/>
<dbReference type="OrthoDB" id="6365676at2759"/>
<dbReference type="PhylomeDB" id="Q90WR8"/>
<dbReference type="Reactome" id="R-GGA-3232118">
    <property type="pathway name" value="SUMOylation of transcription factors"/>
</dbReference>
<dbReference type="PRO" id="PR:Q90WR8"/>
<dbReference type="Proteomes" id="UP000000539">
    <property type="component" value="Chromosome 7"/>
</dbReference>
<dbReference type="Bgee" id="ENSGALG00000031796">
    <property type="expression patterns" value="Expressed in spleen and 13 other cell types or tissues"/>
</dbReference>
<dbReference type="GO" id="GO:0005829">
    <property type="term" value="C:cytosol"/>
    <property type="evidence" value="ECO:0007669"/>
    <property type="project" value="Ensembl"/>
</dbReference>
<dbReference type="GO" id="GO:0016605">
    <property type="term" value="C:PML body"/>
    <property type="evidence" value="ECO:0007669"/>
    <property type="project" value="UniProtKB-SubCell"/>
</dbReference>
<dbReference type="GO" id="GO:0017053">
    <property type="term" value="C:transcription repressor complex"/>
    <property type="evidence" value="ECO:0007669"/>
    <property type="project" value="Ensembl"/>
</dbReference>
<dbReference type="GO" id="GO:0003682">
    <property type="term" value="F:chromatin binding"/>
    <property type="evidence" value="ECO:0007669"/>
    <property type="project" value="Ensembl"/>
</dbReference>
<dbReference type="GO" id="GO:0000981">
    <property type="term" value="F:DNA-binding transcription factor activity, RNA polymerase II-specific"/>
    <property type="evidence" value="ECO:0000318"/>
    <property type="project" value="GO_Central"/>
</dbReference>
<dbReference type="GO" id="GO:0001227">
    <property type="term" value="F:DNA-binding transcription repressor activity, RNA polymerase II-specific"/>
    <property type="evidence" value="ECO:0007669"/>
    <property type="project" value="Ensembl"/>
</dbReference>
<dbReference type="GO" id="GO:0000978">
    <property type="term" value="F:RNA polymerase II cis-regulatory region sequence-specific DNA binding"/>
    <property type="evidence" value="ECO:0000318"/>
    <property type="project" value="GO_Central"/>
</dbReference>
<dbReference type="GO" id="GO:0061629">
    <property type="term" value="F:RNA polymerase II-specific DNA-binding transcription factor binding"/>
    <property type="evidence" value="ECO:0007669"/>
    <property type="project" value="Ensembl"/>
</dbReference>
<dbReference type="GO" id="GO:0008270">
    <property type="term" value="F:zinc ion binding"/>
    <property type="evidence" value="ECO:0007669"/>
    <property type="project" value="UniProtKB-KW"/>
</dbReference>
<dbReference type="GO" id="GO:0030183">
    <property type="term" value="P:B cell differentiation"/>
    <property type="evidence" value="ECO:0007669"/>
    <property type="project" value="Ensembl"/>
</dbReference>
<dbReference type="GO" id="GO:0060216">
    <property type="term" value="P:definitive hemopoiesis"/>
    <property type="evidence" value="ECO:0007669"/>
    <property type="project" value="Ensembl"/>
</dbReference>
<dbReference type="GO" id="GO:0048596">
    <property type="term" value="P:embryonic camera-type eye morphogenesis"/>
    <property type="evidence" value="ECO:0007669"/>
    <property type="project" value="Ensembl"/>
</dbReference>
<dbReference type="GO" id="GO:0048706">
    <property type="term" value="P:embryonic skeletal system development"/>
    <property type="evidence" value="ECO:0007669"/>
    <property type="project" value="Ensembl"/>
</dbReference>
<dbReference type="GO" id="GO:0043353">
    <property type="term" value="P:enucleate erythrocyte differentiation"/>
    <property type="evidence" value="ECO:0007669"/>
    <property type="project" value="Ensembl"/>
</dbReference>
<dbReference type="GO" id="GO:0030851">
    <property type="term" value="P:granulocyte differentiation"/>
    <property type="evidence" value="ECO:0007669"/>
    <property type="project" value="Ensembl"/>
</dbReference>
<dbReference type="GO" id="GO:0001889">
    <property type="term" value="P:liver development"/>
    <property type="evidence" value="ECO:0007669"/>
    <property type="project" value="Ensembl"/>
</dbReference>
<dbReference type="GO" id="GO:0030324">
    <property type="term" value="P:lung development"/>
    <property type="evidence" value="ECO:0007669"/>
    <property type="project" value="Ensembl"/>
</dbReference>
<dbReference type="GO" id="GO:0030219">
    <property type="term" value="P:megakaryocyte differentiation"/>
    <property type="evidence" value="ECO:0007669"/>
    <property type="project" value="Ensembl"/>
</dbReference>
<dbReference type="GO" id="GO:0030224">
    <property type="term" value="P:monocyte differentiation"/>
    <property type="evidence" value="ECO:0007669"/>
    <property type="project" value="Ensembl"/>
</dbReference>
<dbReference type="GO" id="GO:0002318">
    <property type="term" value="P:myeloid progenitor cell differentiation"/>
    <property type="evidence" value="ECO:0007669"/>
    <property type="project" value="Ensembl"/>
</dbReference>
<dbReference type="GO" id="GO:0001779">
    <property type="term" value="P:natural killer cell differentiation"/>
    <property type="evidence" value="ECO:0007669"/>
    <property type="project" value="Ensembl"/>
</dbReference>
<dbReference type="GO" id="GO:0001503">
    <property type="term" value="P:ossification"/>
    <property type="evidence" value="ECO:0007669"/>
    <property type="project" value="Ensembl"/>
</dbReference>
<dbReference type="GO" id="GO:0045944">
    <property type="term" value="P:positive regulation of transcription by RNA polymerase II"/>
    <property type="evidence" value="ECO:0007669"/>
    <property type="project" value="Ensembl"/>
</dbReference>
<dbReference type="GO" id="GO:0006357">
    <property type="term" value="P:regulation of transcription by RNA polymerase II"/>
    <property type="evidence" value="ECO:0000318"/>
    <property type="project" value="GO_Central"/>
</dbReference>
<dbReference type="GO" id="GO:0030217">
    <property type="term" value="P:T cell differentiation"/>
    <property type="evidence" value="ECO:0007669"/>
    <property type="project" value="Ensembl"/>
</dbReference>
<dbReference type="CDD" id="cd22537">
    <property type="entry name" value="SP3_N"/>
    <property type="match status" value="1"/>
</dbReference>
<dbReference type="FunFam" id="3.30.160.60:FF:000014">
    <property type="entry name" value="Transcription factor Sp3"/>
    <property type="match status" value="1"/>
</dbReference>
<dbReference type="FunFam" id="3.30.160.60:FF:000026">
    <property type="entry name" value="Transcription factor Sp3"/>
    <property type="match status" value="1"/>
</dbReference>
<dbReference type="FunFam" id="3.30.160.60:FF:000061">
    <property type="entry name" value="Transcription factor Sp3"/>
    <property type="match status" value="1"/>
</dbReference>
<dbReference type="Gene3D" id="3.30.160.60">
    <property type="entry name" value="Classic Zinc Finger"/>
    <property type="match status" value="3"/>
</dbReference>
<dbReference type="InterPro" id="IPR036236">
    <property type="entry name" value="Znf_C2H2_sf"/>
</dbReference>
<dbReference type="InterPro" id="IPR013087">
    <property type="entry name" value="Znf_C2H2_type"/>
</dbReference>
<dbReference type="PANTHER" id="PTHR23235">
    <property type="entry name" value="KRUEPPEL-LIKE TRANSCRIPTION FACTOR"/>
    <property type="match status" value="1"/>
</dbReference>
<dbReference type="PANTHER" id="PTHR23235:SF3">
    <property type="entry name" value="TRANSCRIPTION FACTOR SP3"/>
    <property type="match status" value="1"/>
</dbReference>
<dbReference type="Pfam" id="PF00096">
    <property type="entry name" value="zf-C2H2"/>
    <property type="match status" value="3"/>
</dbReference>
<dbReference type="SMART" id="SM00355">
    <property type="entry name" value="ZnF_C2H2"/>
    <property type="match status" value="3"/>
</dbReference>
<dbReference type="SUPFAM" id="SSF57667">
    <property type="entry name" value="beta-beta-alpha zinc fingers"/>
    <property type="match status" value="2"/>
</dbReference>
<dbReference type="PROSITE" id="PS00028">
    <property type="entry name" value="ZINC_FINGER_C2H2_1"/>
    <property type="match status" value="3"/>
</dbReference>
<dbReference type="PROSITE" id="PS50157">
    <property type="entry name" value="ZINC_FINGER_C2H2_2"/>
    <property type="match status" value="3"/>
</dbReference>
<evidence type="ECO:0000250" key="1"/>
<evidence type="ECO:0000250" key="2">
    <source>
        <dbReference type="UniProtKB" id="Q02447"/>
    </source>
</evidence>
<evidence type="ECO:0000255" key="3">
    <source>
        <dbReference type="PROSITE-ProRule" id="PRU00042"/>
    </source>
</evidence>
<evidence type="ECO:0000256" key="4">
    <source>
        <dbReference type="SAM" id="MobiDB-lite"/>
    </source>
</evidence>
<evidence type="ECO:0000269" key="5">
    <source>
    </source>
</evidence>
<evidence type="ECO:0000305" key="6"/>
<reference key="1">
    <citation type="journal article" date="2003" name="Oncogene">
        <title>v-Jun downregulates the SPARC target gene by binding to the proximal promoter indirectly through Sp1/3.</title>
        <authorList>
            <person name="Chamboredon S."/>
            <person name="Briggs J."/>
            <person name="Vial E."/>
            <person name="Hurault J."/>
            <person name="Galvagni F."/>
            <person name="Oliviero S."/>
            <person name="Bos T."/>
            <person name="Castellazzi M."/>
        </authorList>
    </citation>
    <scope>NUCLEOTIDE SEQUENCE [MRNA]</scope>
    <scope>FUNCTION</scope>
    <scope>INTERACTION WITH V-JUN</scope>
</reference>
<gene>
    <name type="primary">SP3</name>
</gene>